<accession>Q7T3T4</accession>
<accession>Q5ZI65</accession>
<evidence type="ECO:0000250" key="1"/>
<evidence type="ECO:0000250" key="2">
    <source>
        <dbReference type="UniProtKB" id="Q86VZ5"/>
    </source>
</evidence>
<evidence type="ECO:0000250" key="3">
    <source>
        <dbReference type="UniProtKB" id="Q8VCQ6"/>
    </source>
</evidence>
<evidence type="ECO:0000255" key="4"/>
<evidence type="ECO:0000255" key="5">
    <source>
        <dbReference type="PROSITE-ProRule" id="PRU00184"/>
    </source>
</evidence>
<evidence type="ECO:0000305" key="6"/>
<evidence type="ECO:0000312" key="7">
    <source>
        <dbReference type="EMBL" id="AAP37282.1"/>
    </source>
</evidence>
<dbReference type="EC" id="2.7.8.27"/>
<dbReference type="EMBL" id="AY280962">
    <property type="protein sequence ID" value="AAP37282.1"/>
    <property type="status" value="ALT_SEQ"/>
    <property type="molecule type" value="mRNA"/>
</dbReference>
<dbReference type="EMBL" id="AJ720919">
    <property type="protein sequence ID" value="CAG32578.1"/>
    <property type="status" value="ALT_SEQ"/>
    <property type="molecule type" value="mRNA"/>
</dbReference>
<dbReference type="RefSeq" id="NP_989721.2">
    <property type="nucleotide sequence ID" value="NM_204390.2"/>
</dbReference>
<dbReference type="RefSeq" id="XP_015134154.1">
    <property type="nucleotide sequence ID" value="XM_015278668.1"/>
</dbReference>
<dbReference type="RefSeq" id="XP_015134155.1">
    <property type="nucleotide sequence ID" value="XM_015278669.1"/>
</dbReference>
<dbReference type="RefSeq" id="XP_015134156.1">
    <property type="nucleotide sequence ID" value="XM_015278670.1"/>
</dbReference>
<dbReference type="RefSeq" id="XP_015134157.1">
    <property type="nucleotide sequence ID" value="XM_015278671.1"/>
</dbReference>
<dbReference type="RefSeq" id="XP_015134158.1">
    <property type="nucleotide sequence ID" value="XM_015278672.1"/>
</dbReference>
<dbReference type="RefSeq" id="XP_015134159.1">
    <property type="nucleotide sequence ID" value="XM_015278673.1"/>
</dbReference>
<dbReference type="RefSeq" id="XP_015134160.1">
    <property type="nucleotide sequence ID" value="XM_015278674.1"/>
</dbReference>
<dbReference type="SMR" id="Q7T3T4"/>
<dbReference type="FunCoup" id="Q7T3T4">
    <property type="interactions" value="381"/>
</dbReference>
<dbReference type="STRING" id="9031.ENSGALP00000067686"/>
<dbReference type="PaxDb" id="9031-ENSGALP00000005856"/>
<dbReference type="GeneID" id="378907"/>
<dbReference type="KEGG" id="gga:378907"/>
<dbReference type="CTD" id="259230"/>
<dbReference type="VEuPathDB" id="HostDB:geneid_378907"/>
<dbReference type="eggNOG" id="KOG3058">
    <property type="taxonomic scope" value="Eukaryota"/>
</dbReference>
<dbReference type="HOGENOM" id="CLU_027104_1_0_1"/>
<dbReference type="InParanoid" id="Q7T3T4"/>
<dbReference type="OrthoDB" id="422827at2759"/>
<dbReference type="PhylomeDB" id="Q7T3T4"/>
<dbReference type="BRENDA" id="2.7.8.27">
    <property type="organism ID" value="1306"/>
</dbReference>
<dbReference type="PRO" id="PR:Q7T3T4"/>
<dbReference type="Proteomes" id="UP000000539">
    <property type="component" value="Unassembled WGS sequence"/>
</dbReference>
<dbReference type="GO" id="GO:0005789">
    <property type="term" value="C:endoplasmic reticulum membrane"/>
    <property type="evidence" value="ECO:0000318"/>
    <property type="project" value="GO_Central"/>
</dbReference>
<dbReference type="GO" id="GO:0000139">
    <property type="term" value="C:Golgi membrane"/>
    <property type="evidence" value="ECO:0000250"/>
    <property type="project" value="AgBase"/>
</dbReference>
<dbReference type="GO" id="GO:0005886">
    <property type="term" value="C:plasma membrane"/>
    <property type="evidence" value="ECO:0000318"/>
    <property type="project" value="GO_Central"/>
</dbReference>
<dbReference type="GO" id="GO:0047493">
    <property type="term" value="F:ceramide cholinephosphotransferase activity"/>
    <property type="evidence" value="ECO:0000250"/>
    <property type="project" value="AgBase"/>
</dbReference>
<dbReference type="GO" id="GO:0016301">
    <property type="term" value="F:kinase activity"/>
    <property type="evidence" value="ECO:0007669"/>
    <property type="project" value="UniProtKB-KW"/>
</dbReference>
<dbReference type="GO" id="GO:0033188">
    <property type="term" value="F:sphingomyelin synthase activity"/>
    <property type="evidence" value="ECO:0000250"/>
    <property type="project" value="HGNC-UCL"/>
</dbReference>
<dbReference type="GO" id="GO:0006915">
    <property type="term" value="P:apoptotic process"/>
    <property type="evidence" value="ECO:0007669"/>
    <property type="project" value="UniProtKB-KW"/>
</dbReference>
<dbReference type="GO" id="GO:0046513">
    <property type="term" value="P:ceramide biosynthetic process"/>
    <property type="evidence" value="ECO:0000318"/>
    <property type="project" value="GO_Central"/>
</dbReference>
<dbReference type="GO" id="GO:0006954">
    <property type="term" value="P:inflammatory response"/>
    <property type="evidence" value="ECO:0000250"/>
    <property type="project" value="AgBase"/>
</dbReference>
<dbReference type="GO" id="GO:0043066">
    <property type="term" value="P:negative regulation of apoptotic process"/>
    <property type="evidence" value="ECO:0000250"/>
    <property type="project" value="AgBase"/>
</dbReference>
<dbReference type="GO" id="GO:0006686">
    <property type="term" value="P:sphingomyelin biosynthetic process"/>
    <property type="evidence" value="ECO:0000250"/>
    <property type="project" value="AgBase"/>
</dbReference>
<dbReference type="CDD" id="cd01610">
    <property type="entry name" value="PAP2_like"/>
    <property type="match status" value="1"/>
</dbReference>
<dbReference type="CDD" id="cd09514">
    <property type="entry name" value="SAM_SGMS1"/>
    <property type="match status" value="1"/>
</dbReference>
<dbReference type="FunFam" id="1.10.150.50:FF:000040">
    <property type="entry name" value="Phosphatidylcholine:ceramide cholinephosphotransferase 1"/>
    <property type="match status" value="1"/>
</dbReference>
<dbReference type="Gene3D" id="1.10.150.50">
    <property type="entry name" value="Transcription Factor, Ets-1"/>
    <property type="match status" value="1"/>
</dbReference>
<dbReference type="InterPro" id="IPR001660">
    <property type="entry name" value="SAM"/>
</dbReference>
<dbReference type="InterPro" id="IPR013761">
    <property type="entry name" value="SAM/pointed_sf"/>
</dbReference>
<dbReference type="InterPro" id="IPR041418">
    <property type="entry name" value="SAM_3"/>
</dbReference>
<dbReference type="InterPro" id="IPR045221">
    <property type="entry name" value="Sphingomyelin_synth-like"/>
</dbReference>
<dbReference type="InterPro" id="IPR025749">
    <property type="entry name" value="Sphingomyelin_synth-like_dom"/>
</dbReference>
<dbReference type="PANTHER" id="PTHR21290:SF28">
    <property type="entry name" value="PHOSPHATIDYLCHOLINE:CERAMIDE CHOLINEPHOSPHOTRANSFERASE 1"/>
    <property type="match status" value="1"/>
</dbReference>
<dbReference type="PANTHER" id="PTHR21290">
    <property type="entry name" value="SPHINGOMYELIN SYNTHETASE"/>
    <property type="match status" value="1"/>
</dbReference>
<dbReference type="Pfam" id="PF14360">
    <property type="entry name" value="PAP2_C"/>
    <property type="match status" value="1"/>
</dbReference>
<dbReference type="Pfam" id="PF18016">
    <property type="entry name" value="SAM_3"/>
    <property type="match status" value="1"/>
</dbReference>
<dbReference type="SUPFAM" id="SSF47769">
    <property type="entry name" value="SAM/Pointed domain"/>
    <property type="match status" value="1"/>
</dbReference>
<dbReference type="PROSITE" id="PS50105">
    <property type="entry name" value="SAM_DOMAIN"/>
    <property type="match status" value="1"/>
</dbReference>
<comment type="function">
    <text evidence="2 3">Major sphingomyelin synthase at the Golgi apparatus. Catalyzes the reversible transfer of phosphocholine moiety in sphingomyelin biosynthesis: in the forward reaction transfers phosphocholine head group of phosphatidylcholine (PC) on to ceramide (CER) to form ceramide phosphocholine (sphingomyelin, SM) and diacylglycerol (DAG) as by-product, and in the reverse reaction transfers phosphocholine from SM to DAG to form PC and CER. The direction of the reaction depends on the levels of CER and DAG in Golgi membranes. Converts the newly synthesized CER, that is transported from the endoplasmic reticulum to the trans-Golgi by the Cer transport protein (CERT), to SM. Can form a heteromeric complex with glucosylceramide synthase (GCS) increasing SMS activity and reducing glucosylceramide synthesis, a critical mechanism that controls the metabolic fate of CER in the Golgi (By similarity). Does not use free phosphorylcholine or CDP-choline as donor. Can also transfer phosphoethanolamine head group of phosphatidylethanolamine (PE) on to CER to form ceramide phosphoethanolamine (CPE) (By similarity). Regulates receptor-mediated signal transduction via mitogenic DAG and proapoptotic CER, as well as via SM, a structural component of membrane rafts that serve as platforms for signal transduction and protein sorting. Plays a role in secretory transport via regulation of DAG pool at the Golgi apparatus and its downstream effects on PRKD1 (By similarity).</text>
</comment>
<comment type="catalytic activity">
    <reaction>
        <text>an N-acylsphing-4-enine + a 1,2-diacyl-sn-glycero-3-phosphocholine = a sphingomyelin + a 1,2-diacyl-sn-glycerol</text>
        <dbReference type="Rhea" id="RHEA:18765"/>
        <dbReference type="ChEBI" id="CHEBI:17636"/>
        <dbReference type="ChEBI" id="CHEBI:17815"/>
        <dbReference type="ChEBI" id="CHEBI:52639"/>
        <dbReference type="ChEBI" id="CHEBI:57643"/>
        <dbReference type="EC" id="2.7.8.27"/>
    </reaction>
</comment>
<comment type="catalytic activity">
    <reaction evidence="3">
        <text>an N-acylsphing-4-enine + a 1,2-diacyl-sn-glycero-3-phosphoethanolamine = an N-acylsphing-4-enine 1-phosphoethanolamine + a 1,2-diacyl-sn-glycerol</text>
        <dbReference type="Rhea" id="RHEA:36079"/>
        <dbReference type="ChEBI" id="CHEBI:17815"/>
        <dbReference type="ChEBI" id="CHEBI:52639"/>
        <dbReference type="ChEBI" id="CHEBI:64612"/>
        <dbReference type="ChEBI" id="CHEBI:73203"/>
    </reaction>
    <physiologicalReaction direction="left-to-right" evidence="3">
        <dbReference type="Rhea" id="RHEA:36080"/>
    </physiologicalReaction>
</comment>
<comment type="subcellular location">
    <subcellularLocation>
        <location evidence="1">Golgi apparatus membrane</location>
        <topology evidence="1">Multi-pass membrane protein</topology>
    </subcellularLocation>
</comment>
<comment type="similarity">
    <text evidence="6">Belongs to the sphingomyelin synthase family.</text>
</comment>
<comment type="sequence caution" evidence="6">
    <conflict type="miscellaneous discrepancy">
        <sequence resource="EMBL-CDS" id="AAP37282"/>
    </conflict>
    <text>Unusual initiator. The initiator methionine is coded by a non-canonical CTG leucine codon.</text>
</comment>
<comment type="sequence caution" evidence="6">
    <conflict type="miscellaneous discrepancy">
        <sequence resource="EMBL-CDS" id="CAG32578"/>
    </conflict>
    <text>Unusual initiator. The initiator methionine is coded by a non-canonical CTG leucine codon.</text>
</comment>
<protein>
    <recommendedName>
        <fullName>Phosphatidylcholine:ceramide cholinephosphotransferase 1</fullName>
        <ecNumber>2.7.8.27</ecNumber>
    </recommendedName>
    <alternativeName>
        <fullName>Protein Mob</fullName>
    </alternativeName>
    <alternativeName>
        <fullName>Sphingomyelin synthase 1</fullName>
    </alternativeName>
</protein>
<feature type="chain" id="PRO_0000221071" description="Phosphatidylcholine:ceramide cholinephosphotransferase 1">
    <location>
        <begin position="1"/>
        <end position="417"/>
    </location>
</feature>
<feature type="transmembrane region" description="Helical" evidence="4">
    <location>
        <begin position="140"/>
        <end position="160"/>
    </location>
</feature>
<feature type="transmembrane region" description="Helical" evidence="4">
    <location>
        <begin position="188"/>
        <end position="208"/>
    </location>
</feature>
<feature type="transmembrane region" description="Helical" evidence="4">
    <location>
        <begin position="219"/>
        <end position="239"/>
    </location>
</feature>
<feature type="transmembrane region" description="Helical" evidence="4">
    <location>
        <begin position="280"/>
        <end position="300"/>
    </location>
</feature>
<feature type="transmembrane region" description="Helical" evidence="4">
    <location>
        <begin position="308"/>
        <end position="328"/>
    </location>
</feature>
<feature type="topological domain" description="Cytoplasmic" evidence="4">
    <location>
        <begin position="329"/>
        <end position="417"/>
    </location>
</feature>
<feature type="domain" description="SAM" evidence="5 6">
    <location>
        <begin position="11"/>
        <end position="74"/>
    </location>
</feature>
<feature type="active site" evidence="1">
    <location>
        <position position="289"/>
    </location>
</feature>
<feature type="active site" evidence="1">
    <location>
        <position position="332"/>
    </location>
</feature>
<feature type="active site" evidence="1">
    <location>
        <position position="336"/>
    </location>
</feature>
<feature type="sequence conflict" description="In Ref. 2; CAG32578." evidence="6" ref="2">
    <original>C</original>
    <variation>G</variation>
    <location>
        <position position="224"/>
    </location>
</feature>
<organism evidence="7">
    <name type="scientific">Gallus gallus</name>
    <name type="common">Chicken</name>
    <dbReference type="NCBI Taxonomy" id="9031"/>
    <lineage>
        <taxon>Eukaryota</taxon>
        <taxon>Metazoa</taxon>
        <taxon>Chordata</taxon>
        <taxon>Craniata</taxon>
        <taxon>Vertebrata</taxon>
        <taxon>Euteleostomi</taxon>
        <taxon>Archelosauria</taxon>
        <taxon>Archosauria</taxon>
        <taxon>Dinosauria</taxon>
        <taxon>Saurischia</taxon>
        <taxon>Theropoda</taxon>
        <taxon>Coelurosauria</taxon>
        <taxon>Aves</taxon>
        <taxon>Neognathae</taxon>
        <taxon>Galloanserae</taxon>
        <taxon>Galliformes</taxon>
        <taxon>Phasianidae</taxon>
        <taxon>Phasianinae</taxon>
        <taxon>Gallus</taxon>
    </lineage>
</organism>
<proteinExistence type="evidence at transcript level"/>
<keyword id="KW-0053">Apoptosis</keyword>
<keyword id="KW-0333">Golgi apparatus</keyword>
<keyword id="KW-0418">Kinase</keyword>
<keyword id="KW-0443">Lipid metabolism</keyword>
<keyword id="KW-0472">Membrane</keyword>
<keyword id="KW-1185">Reference proteome</keyword>
<keyword id="KW-0746">Sphingolipid metabolism</keyword>
<keyword id="KW-0808">Transferase</keyword>
<keyword id="KW-0812">Transmembrane</keyword>
<keyword id="KW-1133">Transmembrane helix</keyword>
<name>SMS1_CHICK</name>
<reference evidence="6" key="1">
    <citation type="submission" date="2003-04" db="EMBL/GenBank/DDBJ databases">
        <title>Complete cDNA sequence of a novel gene, chicken mob.</title>
        <authorList>
            <person name="Yuan H.F."/>
            <person name="Wang X."/>
            <person name="Wang D.M."/>
            <person name="Li H.M."/>
            <person name="Feng K."/>
            <person name="Bai C.X."/>
            <person name="Zhang R."/>
            <person name="Chen L."/>
            <person name="Li Y.H."/>
            <person name="Gao Y.H."/>
            <person name="Zhen M."/>
            <person name="Yue W."/>
            <person name="Xie C."/>
            <person name="Xie X.Y."/>
            <person name="Niu L.L."/>
            <person name="Yue W."/>
            <person name="Zhang J."/>
            <person name="Cao H."/>
            <person name="Pei X.T."/>
        </authorList>
    </citation>
    <scope>NUCLEOTIDE SEQUENCE [MRNA]</scope>
    <source>
        <tissue>Bone marrow</tissue>
    </source>
</reference>
<reference key="2">
    <citation type="journal article" date="2005" name="Genome Biol.">
        <title>Full-length cDNAs from chicken bursal lymphocytes to facilitate gene function analysis.</title>
        <authorList>
            <person name="Caldwell R.B."/>
            <person name="Kierzek A.M."/>
            <person name="Arakawa H."/>
            <person name="Bezzubov Y."/>
            <person name="Zaim J."/>
            <person name="Fiedler P."/>
            <person name="Kutter S."/>
            <person name="Blagodatski A."/>
            <person name="Kostovska D."/>
            <person name="Koter M."/>
            <person name="Plachy J."/>
            <person name="Carninci P."/>
            <person name="Hayashizaki Y."/>
            <person name="Buerstedde J.-M."/>
        </authorList>
    </citation>
    <scope>NUCLEOTIDE SEQUENCE [LARGE SCALE MRNA]</scope>
    <source>
        <strain>CB</strain>
        <tissue>Bursa of Fabricius</tissue>
    </source>
</reference>
<gene>
    <name type="primary">SGMS1</name>
    <name type="synonym">MOB</name>
    <name type="ORF">RCJMB04_29o9</name>
</gene>
<sequence>MSGRMKEVVSWSPEEVTNWLMENAVPEYCEPLKSFTGQDLINLTEEDFKKTPLSRVSSDSGQQLLHMIETLKMAHHIEAHKNGHVNGHIHVSVNNTAHENGFSSKTKLNGVPNGYKKEMIKIPMPEPERLQYPMEWGKTFLAFIYALFCFIFTTVTISVVHERVPPKEVQPPLPDAFFDRFDRVQWAFSICEINGMILVGLWLVQWLLLKYKSIISRRFFCIVCTLYLYRCITMYVTTLPVPGMHFKCSPKLFGDWESHLRRIMKLIAGGGLSITGSHNMCGDYLYSGHTVILTLTYLFIKEYSPRRLWWYHWLCWTLSMVGMFCILLAHDHYTVDVVVAYYITTRLFWWYHTMANQQVLKEASQTNLLARVWWYKPFQYFEKNVQGIVPRSYHWPFPWPVLHRGRQVKYSRLVNDT</sequence>